<protein>
    <recommendedName>
        <fullName evidence="1">Bifunctional protein FolD</fullName>
    </recommendedName>
    <domain>
        <recommendedName>
            <fullName evidence="1">Methylenetetrahydrofolate dehydrogenase</fullName>
            <ecNumber evidence="1">1.5.1.5</ecNumber>
        </recommendedName>
    </domain>
    <domain>
        <recommendedName>
            <fullName evidence="1">Methenyltetrahydrofolate cyclohydrolase</fullName>
            <ecNumber evidence="1">3.5.4.9</ecNumber>
        </recommendedName>
    </domain>
</protein>
<name>FOLD_METMJ</name>
<accession>A3CWL0</accession>
<organism>
    <name type="scientific">Methanoculleus marisnigri (strain ATCC 35101 / DSM 1498 / JR1)</name>
    <dbReference type="NCBI Taxonomy" id="368407"/>
    <lineage>
        <taxon>Archaea</taxon>
        <taxon>Methanobacteriati</taxon>
        <taxon>Methanobacteriota</taxon>
        <taxon>Stenosarchaea group</taxon>
        <taxon>Methanomicrobia</taxon>
        <taxon>Methanomicrobiales</taxon>
        <taxon>Methanomicrobiaceae</taxon>
        <taxon>Methanoculleus</taxon>
    </lineage>
</organism>
<gene>
    <name evidence="1" type="primary">folD</name>
    <name type="ordered locus">Memar_1834</name>
</gene>
<evidence type="ECO:0000255" key="1">
    <source>
        <dbReference type="HAMAP-Rule" id="MF_01576"/>
    </source>
</evidence>
<keyword id="KW-0028">Amino-acid biosynthesis</keyword>
<keyword id="KW-0368">Histidine biosynthesis</keyword>
<keyword id="KW-0378">Hydrolase</keyword>
<keyword id="KW-0486">Methionine biosynthesis</keyword>
<keyword id="KW-0511">Multifunctional enzyme</keyword>
<keyword id="KW-0521">NADP</keyword>
<keyword id="KW-0554">One-carbon metabolism</keyword>
<keyword id="KW-0560">Oxidoreductase</keyword>
<keyword id="KW-0658">Purine biosynthesis</keyword>
<feature type="chain" id="PRO_0000305897" description="Bifunctional protein FolD">
    <location>
        <begin position="1"/>
        <end position="283"/>
    </location>
</feature>
<feature type="binding site" evidence="1">
    <location>
        <begin position="159"/>
        <end position="161"/>
    </location>
    <ligand>
        <name>NADP(+)</name>
        <dbReference type="ChEBI" id="CHEBI:58349"/>
    </ligand>
</feature>
<feature type="binding site" evidence="1">
    <location>
        <position position="184"/>
    </location>
    <ligand>
        <name>NADP(+)</name>
        <dbReference type="ChEBI" id="CHEBI:58349"/>
    </ligand>
</feature>
<feature type="binding site" evidence="1">
    <location>
        <position position="225"/>
    </location>
    <ligand>
        <name>NADP(+)</name>
        <dbReference type="ChEBI" id="CHEBI:58349"/>
    </ligand>
</feature>
<reference key="1">
    <citation type="journal article" date="2009" name="Stand. Genomic Sci.">
        <title>Complete genome sequence of Methanoculleus marisnigri Romesser et al. 1981 type strain JR1.</title>
        <authorList>
            <person name="Anderson I.J."/>
            <person name="Sieprawska-Lupa M."/>
            <person name="Lapidus A."/>
            <person name="Nolan M."/>
            <person name="Copeland A."/>
            <person name="Glavina Del Rio T."/>
            <person name="Tice H."/>
            <person name="Dalin E."/>
            <person name="Barry K."/>
            <person name="Saunders E."/>
            <person name="Han C."/>
            <person name="Brettin T."/>
            <person name="Detter J.C."/>
            <person name="Bruce D."/>
            <person name="Mikhailova N."/>
            <person name="Pitluck S."/>
            <person name="Hauser L."/>
            <person name="Land M."/>
            <person name="Lucas S."/>
            <person name="Richardson P."/>
            <person name="Whitman W.B."/>
            <person name="Kyrpides N.C."/>
        </authorList>
    </citation>
    <scope>NUCLEOTIDE SEQUENCE [LARGE SCALE GENOMIC DNA]</scope>
    <source>
        <strain>ATCC 35101 / DSM 1498 / JR1</strain>
    </source>
</reference>
<sequence>MILDGKAVSEKRLELLKEEIEESGLYPRLATVIVGEDPASQMYVRMKHRACERVGIGSIGIELPADASTEQVLEAVARLNNDPDINGILVQLPLPGGVDTTRVIDAVAPEKDVDGFHPCSLGRLFSGTPVFAPCTPQGIMTILDEYRIPIRGKRAVVVGRSIDVGRPMAALLLNADATVTICHSKTENLEDEMRRADILVSAIGKAKFVGPEMVKEGATVIDVGINQDEQGKLCGDVDFDAVKDRAGAITPVPGGVGPMTIATLMENTFRAAKLRTCGNNTVR</sequence>
<proteinExistence type="inferred from homology"/>
<comment type="function">
    <text evidence="1">Catalyzes the oxidation of 5,10-methylenetetrahydrofolate to 5,10-methenyltetrahydrofolate and then the hydrolysis of 5,10-methenyltetrahydrofolate to 10-formyltetrahydrofolate.</text>
</comment>
<comment type="catalytic activity">
    <reaction evidence="1">
        <text>(6R)-5,10-methylene-5,6,7,8-tetrahydrofolate + NADP(+) = (6R)-5,10-methenyltetrahydrofolate + NADPH</text>
        <dbReference type="Rhea" id="RHEA:22812"/>
        <dbReference type="ChEBI" id="CHEBI:15636"/>
        <dbReference type="ChEBI" id="CHEBI:57455"/>
        <dbReference type="ChEBI" id="CHEBI:57783"/>
        <dbReference type="ChEBI" id="CHEBI:58349"/>
        <dbReference type="EC" id="1.5.1.5"/>
    </reaction>
</comment>
<comment type="catalytic activity">
    <reaction evidence="1">
        <text>(6R)-5,10-methenyltetrahydrofolate + H2O = (6R)-10-formyltetrahydrofolate + H(+)</text>
        <dbReference type="Rhea" id="RHEA:23700"/>
        <dbReference type="ChEBI" id="CHEBI:15377"/>
        <dbReference type="ChEBI" id="CHEBI:15378"/>
        <dbReference type="ChEBI" id="CHEBI:57455"/>
        <dbReference type="ChEBI" id="CHEBI:195366"/>
        <dbReference type="EC" id="3.5.4.9"/>
    </reaction>
</comment>
<comment type="pathway">
    <text evidence="1">One-carbon metabolism; tetrahydrofolate interconversion.</text>
</comment>
<comment type="subunit">
    <text evidence="1">Homodimer.</text>
</comment>
<comment type="similarity">
    <text evidence="1">Belongs to the tetrahydrofolate dehydrogenase/cyclohydrolase family.</text>
</comment>
<dbReference type="EC" id="1.5.1.5" evidence="1"/>
<dbReference type="EC" id="3.5.4.9" evidence="1"/>
<dbReference type="EMBL" id="CP000562">
    <property type="protein sequence ID" value="ABN57760.1"/>
    <property type="molecule type" value="Genomic_DNA"/>
</dbReference>
<dbReference type="RefSeq" id="WP_011844669.1">
    <property type="nucleotide sequence ID" value="NC_009051.1"/>
</dbReference>
<dbReference type="SMR" id="A3CWL0"/>
<dbReference type="STRING" id="368407.Memar_1834"/>
<dbReference type="GeneID" id="4847335"/>
<dbReference type="GeneID" id="76729910"/>
<dbReference type="KEGG" id="mem:Memar_1834"/>
<dbReference type="eggNOG" id="arCOG04538">
    <property type="taxonomic scope" value="Archaea"/>
</dbReference>
<dbReference type="HOGENOM" id="CLU_034045_2_1_2"/>
<dbReference type="OrthoDB" id="9455at2157"/>
<dbReference type="UniPathway" id="UPA00193"/>
<dbReference type="Proteomes" id="UP000002146">
    <property type="component" value="Chromosome"/>
</dbReference>
<dbReference type="GO" id="GO:0005829">
    <property type="term" value="C:cytosol"/>
    <property type="evidence" value="ECO:0007669"/>
    <property type="project" value="TreeGrafter"/>
</dbReference>
<dbReference type="GO" id="GO:0004477">
    <property type="term" value="F:methenyltetrahydrofolate cyclohydrolase activity"/>
    <property type="evidence" value="ECO:0007669"/>
    <property type="project" value="UniProtKB-UniRule"/>
</dbReference>
<dbReference type="GO" id="GO:0004488">
    <property type="term" value="F:methylenetetrahydrofolate dehydrogenase (NADP+) activity"/>
    <property type="evidence" value="ECO:0007669"/>
    <property type="project" value="UniProtKB-UniRule"/>
</dbReference>
<dbReference type="GO" id="GO:0000105">
    <property type="term" value="P:L-histidine biosynthetic process"/>
    <property type="evidence" value="ECO:0007669"/>
    <property type="project" value="UniProtKB-KW"/>
</dbReference>
<dbReference type="GO" id="GO:0009086">
    <property type="term" value="P:methionine biosynthetic process"/>
    <property type="evidence" value="ECO:0007669"/>
    <property type="project" value="UniProtKB-KW"/>
</dbReference>
<dbReference type="GO" id="GO:0006164">
    <property type="term" value="P:purine nucleotide biosynthetic process"/>
    <property type="evidence" value="ECO:0007669"/>
    <property type="project" value="UniProtKB-KW"/>
</dbReference>
<dbReference type="GO" id="GO:0035999">
    <property type="term" value="P:tetrahydrofolate interconversion"/>
    <property type="evidence" value="ECO:0007669"/>
    <property type="project" value="UniProtKB-UniRule"/>
</dbReference>
<dbReference type="CDD" id="cd01080">
    <property type="entry name" value="NAD_bind_m-THF_DH_Cyclohyd"/>
    <property type="match status" value="1"/>
</dbReference>
<dbReference type="FunFam" id="3.40.50.720:FF:000094">
    <property type="entry name" value="Bifunctional protein FolD"/>
    <property type="match status" value="1"/>
</dbReference>
<dbReference type="FunFam" id="3.40.50.10860:FF:000005">
    <property type="entry name" value="C-1-tetrahydrofolate synthase, cytoplasmic, putative"/>
    <property type="match status" value="1"/>
</dbReference>
<dbReference type="Gene3D" id="3.40.50.10860">
    <property type="entry name" value="Leucine Dehydrogenase, chain A, domain 1"/>
    <property type="match status" value="1"/>
</dbReference>
<dbReference type="Gene3D" id="3.40.50.720">
    <property type="entry name" value="NAD(P)-binding Rossmann-like Domain"/>
    <property type="match status" value="1"/>
</dbReference>
<dbReference type="HAMAP" id="MF_01576">
    <property type="entry name" value="THF_DHG_CYH"/>
    <property type="match status" value="1"/>
</dbReference>
<dbReference type="InterPro" id="IPR046346">
    <property type="entry name" value="Aminoacid_DH-like_N_sf"/>
</dbReference>
<dbReference type="InterPro" id="IPR036291">
    <property type="entry name" value="NAD(P)-bd_dom_sf"/>
</dbReference>
<dbReference type="InterPro" id="IPR000672">
    <property type="entry name" value="THF_DH/CycHdrlase"/>
</dbReference>
<dbReference type="InterPro" id="IPR020630">
    <property type="entry name" value="THF_DH/CycHdrlase_cat_dom"/>
</dbReference>
<dbReference type="InterPro" id="IPR020867">
    <property type="entry name" value="THF_DH/CycHdrlase_CS"/>
</dbReference>
<dbReference type="InterPro" id="IPR020631">
    <property type="entry name" value="THF_DH/CycHdrlase_NAD-bd_dom"/>
</dbReference>
<dbReference type="NCBIfam" id="NF010775">
    <property type="entry name" value="PRK14178.1"/>
    <property type="match status" value="1"/>
</dbReference>
<dbReference type="NCBIfam" id="NF010783">
    <property type="entry name" value="PRK14186.1"/>
    <property type="match status" value="1"/>
</dbReference>
<dbReference type="PANTHER" id="PTHR48099:SF5">
    <property type="entry name" value="C-1-TETRAHYDROFOLATE SYNTHASE, CYTOPLASMIC"/>
    <property type="match status" value="1"/>
</dbReference>
<dbReference type="PANTHER" id="PTHR48099">
    <property type="entry name" value="C-1-TETRAHYDROFOLATE SYNTHASE, CYTOPLASMIC-RELATED"/>
    <property type="match status" value="1"/>
</dbReference>
<dbReference type="Pfam" id="PF00763">
    <property type="entry name" value="THF_DHG_CYH"/>
    <property type="match status" value="1"/>
</dbReference>
<dbReference type="Pfam" id="PF02882">
    <property type="entry name" value="THF_DHG_CYH_C"/>
    <property type="match status" value="1"/>
</dbReference>
<dbReference type="PRINTS" id="PR00085">
    <property type="entry name" value="THFDHDRGNASE"/>
</dbReference>
<dbReference type="SUPFAM" id="SSF53223">
    <property type="entry name" value="Aminoacid dehydrogenase-like, N-terminal domain"/>
    <property type="match status" value="1"/>
</dbReference>
<dbReference type="SUPFAM" id="SSF51735">
    <property type="entry name" value="NAD(P)-binding Rossmann-fold domains"/>
    <property type="match status" value="1"/>
</dbReference>
<dbReference type="PROSITE" id="PS00766">
    <property type="entry name" value="THF_DHG_CYH_1"/>
    <property type="match status" value="1"/>
</dbReference>
<dbReference type="PROSITE" id="PS00767">
    <property type="entry name" value="THF_DHG_CYH_2"/>
    <property type="match status" value="1"/>
</dbReference>